<evidence type="ECO:0000255" key="1">
    <source>
        <dbReference type="HAMAP-Rule" id="MF_00005"/>
    </source>
</evidence>
<protein>
    <recommendedName>
        <fullName evidence="1">Argininosuccinate synthase</fullName>
        <ecNumber evidence="1">6.3.4.5</ecNumber>
    </recommendedName>
    <alternativeName>
        <fullName evidence="1">Citrulline--aspartate ligase</fullName>
    </alternativeName>
</protein>
<feature type="chain" id="PRO_1000116288" description="Argininosuccinate synthase">
    <location>
        <begin position="1"/>
        <end position="398"/>
    </location>
</feature>
<feature type="binding site" evidence="1">
    <location>
        <begin position="8"/>
        <end position="16"/>
    </location>
    <ligand>
        <name>ATP</name>
        <dbReference type="ChEBI" id="CHEBI:30616"/>
    </ligand>
</feature>
<feature type="binding site" evidence="1">
    <location>
        <position position="87"/>
    </location>
    <ligand>
        <name>L-citrulline</name>
        <dbReference type="ChEBI" id="CHEBI:57743"/>
    </ligand>
</feature>
<feature type="binding site" evidence="1">
    <location>
        <position position="117"/>
    </location>
    <ligand>
        <name>ATP</name>
        <dbReference type="ChEBI" id="CHEBI:30616"/>
    </ligand>
</feature>
<feature type="binding site" evidence="1">
    <location>
        <position position="119"/>
    </location>
    <ligand>
        <name>L-aspartate</name>
        <dbReference type="ChEBI" id="CHEBI:29991"/>
    </ligand>
</feature>
<feature type="binding site" evidence="1">
    <location>
        <position position="123"/>
    </location>
    <ligand>
        <name>L-aspartate</name>
        <dbReference type="ChEBI" id="CHEBI:29991"/>
    </ligand>
</feature>
<feature type="binding site" evidence="1">
    <location>
        <position position="123"/>
    </location>
    <ligand>
        <name>L-citrulline</name>
        <dbReference type="ChEBI" id="CHEBI:57743"/>
    </ligand>
</feature>
<feature type="binding site" evidence="1">
    <location>
        <position position="124"/>
    </location>
    <ligand>
        <name>L-aspartate</name>
        <dbReference type="ChEBI" id="CHEBI:29991"/>
    </ligand>
</feature>
<feature type="binding site" evidence="1">
    <location>
        <position position="127"/>
    </location>
    <ligand>
        <name>L-citrulline</name>
        <dbReference type="ChEBI" id="CHEBI:57743"/>
    </ligand>
</feature>
<feature type="binding site" evidence="1">
    <location>
        <position position="175"/>
    </location>
    <ligand>
        <name>L-citrulline</name>
        <dbReference type="ChEBI" id="CHEBI:57743"/>
    </ligand>
</feature>
<feature type="binding site" evidence="1">
    <location>
        <position position="260"/>
    </location>
    <ligand>
        <name>L-citrulline</name>
        <dbReference type="ChEBI" id="CHEBI:57743"/>
    </ligand>
</feature>
<feature type="binding site" evidence="1">
    <location>
        <position position="272"/>
    </location>
    <ligand>
        <name>L-citrulline</name>
        <dbReference type="ChEBI" id="CHEBI:57743"/>
    </ligand>
</feature>
<proteinExistence type="inferred from homology"/>
<organism>
    <name type="scientific">Mycobacterium bovis (strain BCG / Tokyo 172 / ATCC 35737 / TMC 1019)</name>
    <dbReference type="NCBI Taxonomy" id="561275"/>
    <lineage>
        <taxon>Bacteria</taxon>
        <taxon>Bacillati</taxon>
        <taxon>Actinomycetota</taxon>
        <taxon>Actinomycetes</taxon>
        <taxon>Mycobacteriales</taxon>
        <taxon>Mycobacteriaceae</taxon>
        <taxon>Mycobacterium</taxon>
        <taxon>Mycobacterium tuberculosis complex</taxon>
    </lineage>
</organism>
<gene>
    <name evidence="1" type="primary">argG</name>
    <name type="ordered locus">JTY_1672</name>
</gene>
<name>ASSY_MYCBT</name>
<reference key="1">
    <citation type="journal article" date="2009" name="Vaccine">
        <title>Whole genome sequence analysis of Mycobacterium bovis bacillus Calmette-Guerin (BCG) Tokyo 172: a comparative study of BCG vaccine substrains.</title>
        <authorList>
            <person name="Seki M."/>
            <person name="Honda I."/>
            <person name="Fujita I."/>
            <person name="Yano I."/>
            <person name="Yamamoto S."/>
            <person name="Koyama A."/>
        </authorList>
    </citation>
    <scope>NUCLEOTIDE SEQUENCE [LARGE SCALE GENOMIC DNA]</scope>
    <source>
        <strain>BCG / Tokyo 172 / ATCC 35737 / TMC 1019</strain>
    </source>
</reference>
<dbReference type="EC" id="6.3.4.5" evidence="1"/>
<dbReference type="EMBL" id="AP010918">
    <property type="protein sequence ID" value="BAH25960.1"/>
    <property type="molecule type" value="Genomic_DNA"/>
</dbReference>
<dbReference type="RefSeq" id="WP_003408179.1">
    <property type="nucleotide sequence ID" value="NZ_CP014566.1"/>
</dbReference>
<dbReference type="SMR" id="C1ANT1"/>
<dbReference type="KEGG" id="mbt:JTY_1672"/>
<dbReference type="HOGENOM" id="CLU_032784_4_2_11"/>
<dbReference type="UniPathway" id="UPA00068">
    <property type="reaction ID" value="UER00113"/>
</dbReference>
<dbReference type="GO" id="GO:0005737">
    <property type="term" value="C:cytoplasm"/>
    <property type="evidence" value="ECO:0007669"/>
    <property type="project" value="UniProtKB-SubCell"/>
</dbReference>
<dbReference type="GO" id="GO:0004055">
    <property type="term" value="F:argininosuccinate synthase activity"/>
    <property type="evidence" value="ECO:0007669"/>
    <property type="project" value="UniProtKB-UniRule"/>
</dbReference>
<dbReference type="GO" id="GO:0005524">
    <property type="term" value="F:ATP binding"/>
    <property type="evidence" value="ECO:0007669"/>
    <property type="project" value="UniProtKB-UniRule"/>
</dbReference>
<dbReference type="GO" id="GO:0000053">
    <property type="term" value="P:argininosuccinate metabolic process"/>
    <property type="evidence" value="ECO:0007669"/>
    <property type="project" value="TreeGrafter"/>
</dbReference>
<dbReference type="GO" id="GO:0006526">
    <property type="term" value="P:L-arginine biosynthetic process"/>
    <property type="evidence" value="ECO:0007669"/>
    <property type="project" value="UniProtKB-UniRule"/>
</dbReference>
<dbReference type="GO" id="GO:0000050">
    <property type="term" value="P:urea cycle"/>
    <property type="evidence" value="ECO:0007669"/>
    <property type="project" value="TreeGrafter"/>
</dbReference>
<dbReference type="CDD" id="cd01999">
    <property type="entry name" value="ASS"/>
    <property type="match status" value="1"/>
</dbReference>
<dbReference type="FunFam" id="3.40.50.620:FF:000038">
    <property type="entry name" value="Argininosuccinate synthase"/>
    <property type="match status" value="1"/>
</dbReference>
<dbReference type="FunFam" id="3.90.1260.10:FF:000006">
    <property type="entry name" value="Argininosuccinate synthase"/>
    <property type="match status" value="1"/>
</dbReference>
<dbReference type="Gene3D" id="3.90.1260.10">
    <property type="entry name" value="Argininosuccinate synthetase, chain A, domain 2"/>
    <property type="match status" value="1"/>
</dbReference>
<dbReference type="Gene3D" id="3.40.50.620">
    <property type="entry name" value="HUPs"/>
    <property type="match status" value="1"/>
</dbReference>
<dbReference type="Gene3D" id="1.20.5.470">
    <property type="entry name" value="Single helix bin"/>
    <property type="match status" value="1"/>
</dbReference>
<dbReference type="HAMAP" id="MF_00005">
    <property type="entry name" value="Arg_succ_synth_type1"/>
    <property type="match status" value="1"/>
</dbReference>
<dbReference type="InterPro" id="IPR048268">
    <property type="entry name" value="Arginosuc_syn_C"/>
</dbReference>
<dbReference type="InterPro" id="IPR048267">
    <property type="entry name" value="Arginosuc_syn_N"/>
</dbReference>
<dbReference type="InterPro" id="IPR001518">
    <property type="entry name" value="Arginosuc_synth"/>
</dbReference>
<dbReference type="InterPro" id="IPR018223">
    <property type="entry name" value="Arginosuc_synth_CS"/>
</dbReference>
<dbReference type="InterPro" id="IPR023434">
    <property type="entry name" value="Arginosuc_synth_type_1_subfam"/>
</dbReference>
<dbReference type="InterPro" id="IPR024074">
    <property type="entry name" value="AS_cat/multimer_dom_body"/>
</dbReference>
<dbReference type="InterPro" id="IPR014729">
    <property type="entry name" value="Rossmann-like_a/b/a_fold"/>
</dbReference>
<dbReference type="NCBIfam" id="TIGR00032">
    <property type="entry name" value="argG"/>
    <property type="match status" value="1"/>
</dbReference>
<dbReference type="NCBIfam" id="NF001770">
    <property type="entry name" value="PRK00509.1"/>
    <property type="match status" value="1"/>
</dbReference>
<dbReference type="PANTHER" id="PTHR11587">
    <property type="entry name" value="ARGININOSUCCINATE SYNTHASE"/>
    <property type="match status" value="1"/>
</dbReference>
<dbReference type="PANTHER" id="PTHR11587:SF2">
    <property type="entry name" value="ARGININOSUCCINATE SYNTHASE"/>
    <property type="match status" value="1"/>
</dbReference>
<dbReference type="Pfam" id="PF20979">
    <property type="entry name" value="Arginosuc_syn_C"/>
    <property type="match status" value="1"/>
</dbReference>
<dbReference type="Pfam" id="PF00764">
    <property type="entry name" value="Arginosuc_synth"/>
    <property type="match status" value="1"/>
</dbReference>
<dbReference type="SUPFAM" id="SSF52402">
    <property type="entry name" value="Adenine nucleotide alpha hydrolases-like"/>
    <property type="match status" value="1"/>
</dbReference>
<dbReference type="SUPFAM" id="SSF69864">
    <property type="entry name" value="Argininosuccinate synthetase, C-terminal domain"/>
    <property type="match status" value="1"/>
</dbReference>
<dbReference type="PROSITE" id="PS00564">
    <property type="entry name" value="ARGININOSUCCIN_SYN_1"/>
    <property type="match status" value="1"/>
</dbReference>
<dbReference type="PROSITE" id="PS00565">
    <property type="entry name" value="ARGININOSUCCIN_SYN_2"/>
    <property type="match status" value="1"/>
</dbReference>
<accession>C1ANT1</accession>
<keyword id="KW-0028">Amino-acid biosynthesis</keyword>
<keyword id="KW-0055">Arginine biosynthesis</keyword>
<keyword id="KW-0067">ATP-binding</keyword>
<keyword id="KW-0963">Cytoplasm</keyword>
<keyword id="KW-0436">Ligase</keyword>
<keyword id="KW-0547">Nucleotide-binding</keyword>
<comment type="catalytic activity">
    <reaction evidence="1">
        <text>L-citrulline + L-aspartate + ATP = 2-(N(omega)-L-arginino)succinate + AMP + diphosphate + H(+)</text>
        <dbReference type="Rhea" id="RHEA:10932"/>
        <dbReference type="ChEBI" id="CHEBI:15378"/>
        <dbReference type="ChEBI" id="CHEBI:29991"/>
        <dbReference type="ChEBI" id="CHEBI:30616"/>
        <dbReference type="ChEBI" id="CHEBI:33019"/>
        <dbReference type="ChEBI" id="CHEBI:57472"/>
        <dbReference type="ChEBI" id="CHEBI:57743"/>
        <dbReference type="ChEBI" id="CHEBI:456215"/>
        <dbReference type="EC" id="6.3.4.5"/>
    </reaction>
</comment>
<comment type="pathway">
    <text evidence="1">Amino-acid biosynthesis; L-arginine biosynthesis; L-arginine from L-ornithine and carbamoyl phosphate: step 2/3.</text>
</comment>
<comment type="subunit">
    <text evidence="1">Homotetramer.</text>
</comment>
<comment type="subcellular location">
    <subcellularLocation>
        <location evidence="1">Cytoplasm</location>
    </subcellularLocation>
</comment>
<comment type="similarity">
    <text evidence="1">Belongs to the argininosuccinate synthase family. Type 1 subfamily.</text>
</comment>
<sequence length="398" mass="43682">MSERVILAYSGGLDTSVAISWIGKETGREVVAVAIDLGQGGEHMDVIRQRALDCGAVEAVVVDARDEFAEGYCLPTVLNNALYMDRYPLVSAISRPLIVKHLVAAAREHGGGIVAHGCTGKGNDQVRFEVGFASLAPDLEVLAPVRDYAWTREKAIAFAEENAIPINVTKRSPFSIDQNVWGRAVETGFLEHLWNAPTKDIYAYTEDPTINWGVPDEVIVGFERGVPVSVDGKPVSMLAAIEELNRRAGAQGVGRLDVVEDRLVGIKSREIYEAPGAMVLITAHTELEHVTLERELGRFKRQTDQRWAELVYDGLWYSPLKAALEAFVAKTQEHVSGEVRLVLHGGHIAVNGRRSAESLYDFNLATYDEGDSFDQSAARGFVYVHGLSSKLAARRDLR</sequence>